<name>UPP_ACIET</name>
<evidence type="ECO:0000255" key="1">
    <source>
        <dbReference type="HAMAP-Rule" id="MF_01218"/>
    </source>
</evidence>
<dbReference type="EC" id="2.4.2.9" evidence="1"/>
<dbReference type="EMBL" id="CP001392">
    <property type="protein sequence ID" value="ACM33154.1"/>
    <property type="molecule type" value="Genomic_DNA"/>
</dbReference>
<dbReference type="RefSeq" id="WP_015913242.1">
    <property type="nucleotide sequence ID" value="NC_011992.1"/>
</dbReference>
<dbReference type="SMR" id="B9MJ16"/>
<dbReference type="GeneID" id="84681617"/>
<dbReference type="KEGG" id="dia:Dtpsy_1697"/>
<dbReference type="eggNOG" id="COG0035">
    <property type="taxonomic scope" value="Bacteria"/>
</dbReference>
<dbReference type="HOGENOM" id="CLU_067096_2_2_4"/>
<dbReference type="UniPathway" id="UPA00574">
    <property type="reaction ID" value="UER00636"/>
</dbReference>
<dbReference type="Proteomes" id="UP000000450">
    <property type="component" value="Chromosome"/>
</dbReference>
<dbReference type="GO" id="GO:0005525">
    <property type="term" value="F:GTP binding"/>
    <property type="evidence" value="ECO:0007669"/>
    <property type="project" value="UniProtKB-KW"/>
</dbReference>
<dbReference type="GO" id="GO:0000287">
    <property type="term" value="F:magnesium ion binding"/>
    <property type="evidence" value="ECO:0007669"/>
    <property type="project" value="UniProtKB-UniRule"/>
</dbReference>
<dbReference type="GO" id="GO:0004845">
    <property type="term" value="F:uracil phosphoribosyltransferase activity"/>
    <property type="evidence" value="ECO:0007669"/>
    <property type="project" value="UniProtKB-UniRule"/>
</dbReference>
<dbReference type="GO" id="GO:0044206">
    <property type="term" value="P:UMP salvage"/>
    <property type="evidence" value="ECO:0007669"/>
    <property type="project" value="UniProtKB-UniRule"/>
</dbReference>
<dbReference type="GO" id="GO:0006223">
    <property type="term" value="P:uracil salvage"/>
    <property type="evidence" value="ECO:0007669"/>
    <property type="project" value="InterPro"/>
</dbReference>
<dbReference type="CDD" id="cd06223">
    <property type="entry name" value="PRTases_typeI"/>
    <property type="match status" value="1"/>
</dbReference>
<dbReference type="FunFam" id="3.40.50.2020:FF:000003">
    <property type="entry name" value="Uracil phosphoribosyltransferase"/>
    <property type="match status" value="1"/>
</dbReference>
<dbReference type="Gene3D" id="3.40.50.2020">
    <property type="match status" value="1"/>
</dbReference>
<dbReference type="HAMAP" id="MF_01218_B">
    <property type="entry name" value="Upp_B"/>
    <property type="match status" value="1"/>
</dbReference>
<dbReference type="InterPro" id="IPR000836">
    <property type="entry name" value="PRibTrfase_dom"/>
</dbReference>
<dbReference type="InterPro" id="IPR029057">
    <property type="entry name" value="PRTase-like"/>
</dbReference>
<dbReference type="InterPro" id="IPR034332">
    <property type="entry name" value="Upp_B"/>
</dbReference>
<dbReference type="InterPro" id="IPR050054">
    <property type="entry name" value="UPRTase/APRTase"/>
</dbReference>
<dbReference type="InterPro" id="IPR005765">
    <property type="entry name" value="Ura_phspho_trans"/>
</dbReference>
<dbReference type="NCBIfam" id="NF001097">
    <property type="entry name" value="PRK00129.1"/>
    <property type="match status" value="1"/>
</dbReference>
<dbReference type="NCBIfam" id="TIGR01091">
    <property type="entry name" value="upp"/>
    <property type="match status" value="1"/>
</dbReference>
<dbReference type="PANTHER" id="PTHR32315">
    <property type="entry name" value="ADENINE PHOSPHORIBOSYLTRANSFERASE"/>
    <property type="match status" value="1"/>
</dbReference>
<dbReference type="PANTHER" id="PTHR32315:SF4">
    <property type="entry name" value="URACIL PHOSPHORIBOSYLTRANSFERASE, CHLOROPLASTIC"/>
    <property type="match status" value="1"/>
</dbReference>
<dbReference type="Pfam" id="PF14681">
    <property type="entry name" value="UPRTase"/>
    <property type="match status" value="1"/>
</dbReference>
<dbReference type="SUPFAM" id="SSF53271">
    <property type="entry name" value="PRTase-like"/>
    <property type="match status" value="1"/>
</dbReference>
<organism>
    <name type="scientific">Acidovorax ebreus (strain TPSY)</name>
    <name type="common">Diaphorobacter sp. (strain TPSY)</name>
    <dbReference type="NCBI Taxonomy" id="535289"/>
    <lineage>
        <taxon>Bacteria</taxon>
        <taxon>Pseudomonadati</taxon>
        <taxon>Pseudomonadota</taxon>
        <taxon>Betaproteobacteria</taxon>
        <taxon>Burkholderiales</taxon>
        <taxon>Comamonadaceae</taxon>
        <taxon>Diaphorobacter</taxon>
    </lineage>
</organism>
<reference key="1">
    <citation type="submission" date="2009-01" db="EMBL/GenBank/DDBJ databases">
        <title>Complete sequence of Diaphorobacter sp. TPSY.</title>
        <authorList>
            <consortium name="US DOE Joint Genome Institute"/>
            <person name="Lucas S."/>
            <person name="Copeland A."/>
            <person name="Lapidus A."/>
            <person name="Glavina del Rio T."/>
            <person name="Tice H."/>
            <person name="Bruce D."/>
            <person name="Goodwin L."/>
            <person name="Pitluck S."/>
            <person name="Chertkov O."/>
            <person name="Brettin T."/>
            <person name="Detter J.C."/>
            <person name="Han C."/>
            <person name="Larimer F."/>
            <person name="Land M."/>
            <person name="Hauser L."/>
            <person name="Kyrpides N."/>
            <person name="Mikhailova N."/>
            <person name="Coates J.D."/>
        </authorList>
    </citation>
    <scope>NUCLEOTIDE SEQUENCE [LARGE SCALE GENOMIC DNA]</scope>
    <source>
        <strain>TPSY</strain>
    </source>
</reference>
<sequence>MSNVHVIDHPLVQHKLTLMRKKDASTNSFRRLLGELSTLMAYEVTRDMPLQDIQIETPLETMTGKVIDGKKLVLVSILRAGNGFLDGMLNVVPGARIGHIGLYRDPDTLQPVEYYFKMPSEMAERDIIVVDPMLATGNSAAAAVARLKQLQPRSIKFVCLLAAPEGVATLQKAHPDVPIYTAAIDRELNDHGYILPGLGDAGDRIFGTK</sequence>
<keyword id="KW-0021">Allosteric enzyme</keyword>
<keyword id="KW-0328">Glycosyltransferase</keyword>
<keyword id="KW-0342">GTP-binding</keyword>
<keyword id="KW-0460">Magnesium</keyword>
<keyword id="KW-0547">Nucleotide-binding</keyword>
<keyword id="KW-1185">Reference proteome</keyword>
<keyword id="KW-0808">Transferase</keyword>
<proteinExistence type="inferred from homology"/>
<feature type="chain" id="PRO_1000164822" description="Uracil phosphoribosyltransferase">
    <location>
        <begin position="1"/>
        <end position="209"/>
    </location>
</feature>
<feature type="binding site" evidence="1">
    <location>
        <position position="79"/>
    </location>
    <ligand>
        <name>5-phospho-alpha-D-ribose 1-diphosphate</name>
        <dbReference type="ChEBI" id="CHEBI:58017"/>
    </ligand>
</feature>
<feature type="binding site" evidence="1">
    <location>
        <position position="104"/>
    </location>
    <ligand>
        <name>5-phospho-alpha-D-ribose 1-diphosphate</name>
        <dbReference type="ChEBI" id="CHEBI:58017"/>
    </ligand>
</feature>
<feature type="binding site" evidence="1">
    <location>
        <begin position="131"/>
        <end position="139"/>
    </location>
    <ligand>
        <name>5-phospho-alpha-D-ribose 1-diphosphate</name>
        <dbReference type="ChEBI" id="CHEBI:58017"/>
    </ligand>
</feature>
<feature type="binding site" evidence="1">
    <location>
        <position position="194"/>
    </location>
    <ligand>
        <name>uracil</name>
        <dbReference type="ChEBI" id="CHEBI:17568"/>
    </ligand>
</feature>
<feature type="binding site" evidence="1">
    <location>
        <begin position="199"/>
        <end position="201"/>
    </location>
    <ligand>
        <name>uracil</name>
        <dbReference type="ChEBI" id="CHEBI:17568"/>
    </ligand>
</feature>
<feature type="binding site" evidence="1">
    <location>
        <position position="200"/>
    </location>
    <ligand>
        <name>5-phospho-alpha-D-ribose 1-diphosphate</name>
        <dbReference type="ChEBI" id="CHEBI:58017"/>
    </ligand>
</feature>
<protein>
    <recommendedName>
        <fullName evidence="1">Uracil phosphoribosyltransferase</fullName>
        <ecNumber evidence="1">2.4.2.9</ecNumber>
    </recommendedName>
    <alternativeName>
        <fullName evidence="1">UMP pyrophosphorylase</fullName>
    </alternativeName>
    <alternativeName>
        <fullName evidence="1">UPRTase</fullName>
    </alternativeName>
</protein>
<comment type="function">
    <text evidence="1">Catalyzes the conversion of uracil and 5-phospho-alpha-D-ribose 1-diphosphate (PRPP) to UMP and diphosphate.</text>
</comment>
<comment type="catalytic activity">
    <reaction evidence="1">
        <text>UMP + diphosphate = 5-phospho-alpha-D-ribose 1-diphosphate + uracil</text>
        <dbReference type="Rhea" id="RHEA:13017"/>
        <dbReference type="ChEBI" id="CHEBI:17568"/>
        <dbReference type="ChEBI" id="CHEBI:33019"/>
        <dbReference type="ChEBI" id="CHEBI:57865"/>
        <dbReference type="ChEBI" id="CHEBI:58017"/>
        <dbReference type="EC" id="2.4.2.9"/>
    </reaction>
</comment>
<comment type="cofactor">
    <cofactor evidence="1">
        <name>Mg(2+)</name>
        <dbReference type="ChEBI" id="CHEBI:18420"/>
    </cofactor>
    <text evidence="1">Binds 1 Mg(2+) ion per subunit. The magnesium is bound as Mg-PRPP.</text>
</comment>
<comment type="activity regulation">
    <text evidence="1">Allosterically activated by GTP.</text>
</comment>
<comment type="pathway">
    <text evidence="1">Pyrimidine metabolism; UMP biosynthesis via salvage pathway; UMP from uracil: step 1/1.</text>
</comment>
<comment type="similarity">
    <text evidence="1">Belongs to the UPRTase family.</text>
</comment>
<accession>B9MJ16</accession>
<gene>
    <name evidence="1" type="primary">upp</name>
    <name type="ordered locus">Dtpsy_1697</name>
</gene>